<feature type="chain" id="PRO_0000256984" description="Chaperonin GroEL">
    <location>
        <begin position="1"/>
        <end position="548"/>
    </location>
</feature>
<feature type="binding site" evidence="1">
    <location>
        <begin position="30"/>
        <end position="33"/>
    </location>
    <ligand>
        <name>ATP</name>
        <dbReference type="ChEBI" id="CHEBI:30616"/>
    </ligand>
</feature>
<feature type="binding site" evidence="1">
    <location>
        <position position="51"/>
    </location>
    <ligand>
        <name>ATP</name>
        <dbReference type="ChEBI" id="CHEBI:30616"/>
    </ligand>
</feature>
<feature type="binding site" evidence="1">
    <location>
        <begin position="87"/>
        <end position="91"/>
    </location>
    <ligand>
        <name>ATP</name>
        <dbReference type="ChEBI" id="CHEBI:30616"/>
    </ligand>
</feature>
<feature type="binding site" evidence="1">
    <location>
        <position position="415"/>
    </location>
    <ligand>
        <name>ATP</name>
        <dbReference type="ChEBI" id="CHEBI:30616"/>
    </ligand>
</feature>
<feature type="binding site" evidence="1">
    <location>
        <begin position="479"/>
        <end position="481"/>
    </location>
    <ligand>
        <name>ATP</name>
        <dbReference type="ChEBI" id="CHEBI:30616"/>
    </ligand>
</feature>
<feature type="binding site" evidence="1">
    <location>
        <position position="495"/>
    </location>
    <ligand>
        <name>ATP</name>
        <dbReference type="ChEBI" id="CHEBI:30616"/>
    </ligand>
</feature>
<accession>Q57GP7</accession>
<comment type="function">
    <text evidence="1">Together with its co-chaperonin GroES, plays an essential role in assisting protein folding. The GroEL-GroES system forms a nano-cage that allows encapsulation of the non-native substrate proteins and provides a physical environment optimized to promote and accelerate protein folding.</text>
</comment>
<comment type="catalytic activity">
    <reaction evidence="1">
        <text>ATP + H2O + a folded polypeptide = ADP + phosphate + an unfolded polypeptide.</text>
        <dbReference type="EC" id="5.6.1.7"/>
    </reaction>
</comment>
<comment type="subunit">
    <text evidence="1">Forms a cylinder of 14 subunits composed of two heptameric rings stacked back-to-back. Interacts with the co-chaperonin GroES.</text>
</comment>
<comment type="subcellular location">
    <subcellularLocation>
        <location evidence="1">Cytoplasm</location>
    </subcellularLocation>
</comment>
<comment type="similarity">
    <text evidence="1">Belongs to the chaperonin (HSP60) family.</text>
</comment>
<gene>
    <name evidence="1" type="primary">groEL</name>
    <name evidence="1" type="synonym">groL</name>
    <name type="ordered locus">SCH_4209</name>
</gene>
<evidence type="ECO:0000255" key="1">
    <source>
        <dbReference type="HAMAP-Rule" id="MF_00600"/>
    </source>
</evidence>
<proteinExistence type="inferred from homology"/>
<reference key="1">
    <citation type="journal article" date="2005" name="Nucleic Acids Res.">
        <title>The genome sequence of Salmonella enterica serovar Choleraesuis, a highly invasive and resistant zoonotic pathogen.</title>
        <authorList>
            <person name="Chiu C.-H."/>
            <person name="Tang P."/>
            <person name="Chu C."/>
            <person name="Hu S."/>
            <person name="Bao Q."/>
            <person name="Yu J."/>
            <person name="Chou Y.-Y."/>
            <person name="Wang H.-S."/>
            <person name="Lee Y.-S."/>
        </authorList>
    </citation>
    <scope>NUCLEOTIDE SEQUENCE [LARGE SCALE GENOMIC DNA]</scope>
    <source>
        <strain>SC-B67</strain>
    </source>
</reference>
<sequence length="548" mass="57286">MAAKDVKFGNDARVKMLRGVNVLADAVKVTLGPKGRNVVLDKSFGAPTITKDGVSVAREIELEDKFENMGAQMVKEVASKANDAAGDGTTTATVLAQSIITEGLKAVAAGMNPMDLKRGIDKAVAAAVEELKALSVPCSDSKAIAQVGTISANSDETVGKLIAEAMDKVGKEGVITVEDGTGLQDELDVVEGMQFDRGYLSPYFINKPETGAVELESPFILLADKKISNIREMLPVLEAVAKAGKPLLIIAEDVEGEALATLVVNTMRGIVKVAAVKAPGFGDRRKAMLQDIATLTGGTVISEEIGMELEKATLEDLGQAKRVVINKDTTTIIDGVGEEAAIQGRVAQIRQQIEEATSDYDREKLQERVAKLAGGVAVIKVGAATEVEMKEKKARVEDALHATRAAVEEGVVAGGGVALIRVASKIADLKGQNEDQNVGIKVALRAMEAPLRQIVLNCGEEPSVVANTVKGGDGNYGYNAATEEYGNMIDMGILDPTKVTRSALQYAASVAGLMITTECMVTDLPKSDAPDLGAAGGMGGMGGMGGMM</sequence>
<protein>
    <recommendedName>
        <fullName evidence="1">Chaperonin GroEL</fullName>
        <ecNumber evidence="1">5.6.1.7</ecNumber>
    </recommendedName>
    <alternativeName>
        <fullName evidence="1">60 kDa chaperonin</fullName>
    </alternativeName>
    <alternativeName>
        <fullName evidence="1">Chaperonin-60</fullName>
        <shortName evidence="1">Cpn60</shortName>
    </alternativeName>
</protein>
<organism>
    <name type="scientific">Salmonella choleraesuis (strain SC-B67)</name>
    <dbReference type="NCBI Taxonomy" id="321314"/>
    <lineage>
        <taxon>Bacteria</taxon>
        <taxon>Pseudomonadati</taxon>
        <taxon>Pseudomonadota</taxon>
        <taxon>Gammaproteobacteria</taxon>
        <taxon>Enterobacterales</taxon>
        <taxon>Enterobacteriaceae</taxon>
        <taxon>Salmonella</taxon>
    </lineage>
</organism>
<keyword id="KW-0067">ATP-binding</keyword>
<keyword id="KW-0143">Chaperone</keyword>
<keyword id="KW-0963">Cytoplasm</keyword>
<keyword id="KW-0413">Isomerase</keyword>
<keyword id="KW-0547">Nucleotide-binding</keyword>
<dbReference type="EC" id="5.6.1.7" evidence="1"/>
<dbReference type="EMBL" id="AE017220">
    <property type="protein sequence ID" value="AAX68115.1"/>
    <property type="molecule type" value="Genomic_DNA"/>
</dbReference>
<dbReference type="RefSeq" id="WP_000729126.1">
    <property type="nucleotide sequence ID" value="NC_006905.1"/>
</dbReference>
<dbReference type="SMR" id="Q57GP7"/>
<dbReference type="KEGG" id="sec:SCH_4209"/>
<dbReference type="HOGENOM" id="CLU_016503_3_0_6"/>
<dbReference type="Proteomes" id="UP000000538">
    <property type="component" value="Chromosome"/>
</dbReference>
<dbReference type="GO" id="GO:0005737">
    <property type="term" value="C:cytoplasm"/>
    <property type="evidence" value="ECO:0007669"/>
    <property type="project" value="UniProtKB-SubCell"/>
</dbReference>
<dbReference type="GO" id="GO:0005524">
    <property type="term" value="F:ATP binding"/>
    <property type="evidence" value="ECO:0007669"/>
    <property type="project" value="UniProtKB-UniRule"/>
</dbReference>
<dbReference type="GO" id="GO:0140662">
    <property type="term" value="F:ATP-dependent protein folding chaperone"/>
    <property type="evidence" value="ECO:0007669"/>
    <property type="project" value="InterPro"/>
</dbReference>
<dbReference type="GO" id="GO:0016853">
    <property type="term" value="F:isomerase activity"/>
    <property type="evidence" value="ECO:0007669"/>
    <property type="project" value="UniProtKB-KW"/>
</dbReference>
<dbReference type="GO" id="GO:0051082">
    <property type="term" value="F:unfolded protein binding"/>
    <property type="evidence" value="ECO:0007669"/>
    <property type="project" value="UniProtKB-UniRule"/>
</dbReference>
<dbReference type="GO" id="GO:0042026">
    <property type="term" value="P:protein refolding"/>
    <property type="evidence" value="ECO:0007669"/>
    <property type="project" value="UniProtKB-UniRule"/>
</dbReference>
<dbReference type="CDD" id="cd03344">
    <property type="entry name" value="GroEL"/>
    <property type="match status" value="1"/>
</dbReference>
<dbReference type="FunFam" id="1.10.560.10:FF:000001">
    <property type="entry name" value="60 kDa chaperonin"/>
    <property type="match status" value="1"/>
</dbReference>
<dbReference type="FunFam" id="3.50.7.10:FF:000001">
    <property type="entry name" value="60 kDa chaperonin"/>
    <property type="match status" value="1"/>
</dbReference>
<dbReference type="Gene3D" id="3.50.7.10">
    <property type="entry name" value="GroEL"/>
    <property type="match status" value="1"/>
</dbReference>
<dbReference type="Gene3D" id="1.10.560.10">
    <property type="entry name" value="GroEL-like equatorial domain"/>
    <property type="match status" value="1"/>
</dbReference>
<dbReference type="Gene3D" id="3.30.260.10">
    <property type="entry name" value="TCP-1-like chaperonin intermediate domain"/>
    <property type="match status" value="1"/>
</dbReference>
<dbReference type="HAMAP" id="MF_00600">
    <property type="entry name" value="CH60"/>
    <property type="match status" value="1"/>
</dbReference>
<dbReference type="InterPro" id="IPR018370">
    <property type="entry name" value="Chaperonin_Cpn60_CS"/>
</dbReference>
<dbReference type="InterPro" id="IPR001844">
    <property type="entry name" value="Cpn60/GroEL"/>
</dbReference>
<dbReference type="InterPro" id="IPR002423">
    <property type="entry name" value="Cpn60/GroEL/TCP-1"/>
</dbReference>
<dbReference type="InterPro" id="IPR027409">
    <property type="entry name" value="GroEL-like_apical_dom_sf"/>
</dbReference>
<dbReference type="InterPro" id="IPR027413">
    <property type="entry name" value="GROEL-like_equatorial_sf"/>
</dbReference>
<dbReference type="InterPro" id="IPR027410">
    <property type="entry name" value="TCP-1-like_intermed_sf"/>
</dbReference>
<dbReference type="NCBIfam" id="TIGR02348">
    <property type="entry name" value="GroEL"/>
    <property type="match status" value="1"/>
</dbReference>
<dbReference type="NCBIfam" id="NF000592">
    <property type="entry name" value="PRK00013.1"/>
    <property type="match status" value="1"/>
</dbReference>
<dbReference type="NCBIfam" id="NF009487">
    <property type="entry name" value="PRK12849.1"/>
    <property type="match status" value="1"/>
</dbReference>
<dbReference type="NCBIfam" id="NF009488">
    <property type="entry name" value="PRK12850.1"/>
    <property type="match status" value="1"/>
</dbReference>
<dbReference type="NCBIfam" id="NF009489">
    <property type="entry name" value="PRK12851.1"/>
    <property type="match status" value="1"/>
</dbReference>
<dbReference type="PANTHER" id="PTHR45633">
    <property type="entry name" value="60 KDA HEAT SHOCK PROTEIN, MITOCHONDRIAL"/>
    <property type="match status" value="1"/>
</dbReference>
<dbReference type="Pfam" id="PF00118">
    <property type="entry name" value="Cpn60_TCP1"/>
    <property type="match status" value="1"/>
</dbReference>
<dbReference type="PRINTS" id="PR00298">
    <property type="entry name" value="CHAPERONIN60"/>
</dbReference>
<dbReference type="SUPFAM" id="SSF52029">
    <property type="entry name" value="GroEL apical domain-like"/>
    <property type="match status" value="1"/>
</dbReference>
<dbReference type="SUPFAM" id="SSF48592">
    <property type="entry name" value="GroEL equatorial domain-like"/>
    <property type="match status" value="1"/>
</dbReference>
<dbReference type="SUPFAM" id="SSF54849">
    <property type="entry name" value="GroEL-intermediate domain like"/>
    <property type="match status" value="1"/>
</dbReference>
<dbReference type="PROSITE" id="PS00296">
    <property type="entry name" value="CHAPERONINS_CPN60"/>
    <property type="match status" value="1"/>
</dbReference>
<name>CH60_SALCH</name>